<sequence>MIASKFGIGQQVRHSLLGYLGVVVDIDPEYSLDEPSPDELAVNDELRAAPWYHVVMEDDDGQPVHTYLAEAQLRSEMRDEHPEQPSMDELARTIRKQLQAPRLRN</sequence>
<keyword id="KW-0963">Cytoplasm</keyword>
<keyword id="KW-0346">Stress response</keyword>
<name>HSPQ_SALDC</name>
<proteinExistence type="inferred from homology"/>
<reference key="1">
    <citation type="journal article" date="2011" name="J. Bacteriol.">
        <title>Comparative genomics of 28 Salmonella enterica isolates: evidence for CRISPR-mediated adaptive sublineage evolution.</title>
        <authorList>
            <person name="Fricke W.F."/>
            <person name="Mammel M.K."/>
            <person name="McDermott P.F."/>
            <person name="Tartera C."/>
            <person name="White D.G."/>
            <person name="Leclerc J.E."/>
            <person name="Ravel J."/>
            <person name="Cebula T.A."/>
        </authorList>
    </citation>
    <scope>NUCLEOTIDE SEQUENCE [LARGE SCALE GENOMIC DNA]</scope>
    <source>
        <strain>CT_02021853</strain>
    </source>
</reference>
<gene>
    <name evidence="1" type="primary">hspQ</name>
    <name type="ordered locus">SeD_A1154</name>
</gene>
<feature type="chain" id="PRO_1000138414" description="Heat shock protein HspQ">
    <location>
        <begin position="1"/>
        <end position="105"/>
    </location>
</feature>
<feature type="region of interest" description="Disordered" evidence="2">
    <location>
        <begin position="76"/>
        <end position="105"/>
    </location>
</feature>
<comment type="function">
    <text evidence="1">Involved in the degradation of certain denaturated proteins, including DnaA, during heat shock stress.</text>
</comment>
<comment type="subcellular location">
    <subcellularLocation>
        <location evidence="1">Cytoplasm</location>
    </subcellularLocation>
</comment>
<comment type="similarity">
    <text evidence="1">Belongs to the HspQ family.</text>
</comment>
<protein>
    <recommendedName>
        <fullName evidence="1">Heat shock protein HspQ</fullName>
    </recommendedName>
</protein>
<organism>
    <name type="scientific">Salmonella dublin (strain CT_02021853)</name>
    <dbReference type="NCBI Taxonomy" id="439851"/>
    <lineage>
        <taxon>Bacteria</taxon>
        <taxon>Pseudomonadati</taxon>
        <taxon>Pseudomonadota</taxon>
        <taxon>Gammaproteobacteria</taxon>
        <taxon>Enterobacterales</taxon>
        <taxon>Enterobacteriaceae</taxon>
        <taxon>Salmonella</taxon>
    </lineage>
</organism>
<evidence type="ECO:0000255" key="1">
    <source>
        <dbReference type="HAMAP-Rule" id="MF_01194"/>
    </source>
</evidence>
<evidence type="ECO:0000256" key="2">
    <source>
        <dbReference type="SAM" id="MobiDB-lite"/>
    </source>
</evidence>
<dbReference type="EMBL" id="CP001144">
    <property type="protein sequence ID" value="ACH76604.1"/>
    <property type="molecule type" value="Genomic_DNA"/>
</dbReference>
<dbReference type="RefSeq" id="WP_000561983.1">
    <property type="nucleotide sequence ID" value="NC_011205.1"/>
</dbReference>
<dbReference type="SMR" id="B5FR08"/>
<dbReference type="GeneID" id="66755429"/>
<dbReference type="KEGG" id="sed:SeD_A1154"/>
<dbReference type="HOGENOM" id="CLU_123865_1_0_6"/>
<dbReference type="Proteomes" id="UP000008322">
    <property type="component" value="Chromosome"/>
</dbReference>
<dbReference type="GO" id="GO:0005737">
    <property type="term" value="C:cytoplasm"/>
    <property type="evidence" value="ECO:0007669"/>
    <property type="project" value="UniProtKB-SubCell"/>
</dbReference>
<dbReference type="GO" id="GO:0003677">
    <property type="term" value="F:DNA binding"/>
    <property type="evidence" value="ECO:0007669"/>
    <property type="project" value="InterPro"/>
</dbReference>
<dbReference type="GO" id="GO:0009408">
    <property type="term" value="P:response to heat"/>
    <property type="evidence" value="ECO:0007669"/>
    <property type="project" value="UniProtKB-UniRule"/>
</dbReference>
<dbReference type="Gene3D" id="2.30.30.390">
    <property type="entry name" value="Hemimethylated DNA-binding domain"/>
    <property type="match status" value="1"/>
</dbReference>
<dbReference type="HAMAP" id="MF_01194">
    <property type="entry name" value="HspQ"/>
    <property type="match status" value="1"/>
</dbReference>
<dbReference type="InterPro" id="IPR011722">
    <property type="entry name" value="Hemimethylated_DNA-bd_dom"/>
</dbReference>
<dbReference type="InterPro" id="IPR036623">
    <property type="entry name" value="Hemimethylated_DNA-bd_sf"/>
</dbReference>
<dbReference type="InterPro" id="IPR022866">
    <property type="entry name" value="HspQ"/>
</dbReference>
<dbReference type="NCBIfam" id="NF010729">
    <property type="entry name" value="PRK14129.1"/>
    <property type="match status" value="1"/>
</dbReference>
<dbReference type="NCBIfam" id="TIGR02097">
    <property type="entry name" value="yccV"/>
    <property type="match status" value="1"/>
</dbReference>
<dbReference type="Pfam" id="PF08755">
    <property type="entry name" value="YccV-like"/>
    <property type="match status" value="1"/>
</dbReference>
<dbReference type="SMART" id="SM00992">
    <property type="entry name" value="YccV-like"/>
    <property type="match status" value="1"/>
</dbReference>
<dbReference type="SUPFAM" id="SSF141255">
    <property type="entry name" value="YccV-like"/>
    <property type="match status" value="1"/>
</dbReference>
<accession>B5FR08</accession>